<protein>
    <recommendedName>
        <fullName evidence="1">Homoserine O-acetyltransferase</fullName>
        <shortName evidence="1 3">HAT</shortName>
        <ecNumber evidence="1 2">2.3.1.31</ecNumber>
    </recommendedName>
    <alternativeName>
        <fullName evidence="1">Homoserine transacetylase</fullName>
        <shortName evidence="1">HTA</shortName>
    </alternativeName>
</protein>
<reference key="1">
    <citation type="submission" date="2010-03" db="EMBL/GenBank/DDBJ databases">
        <title>The complete genome of Methanohalophilus mahii DSM 5219.</title>
        <authorList>
            <consortium name="US DOE Joint Genome Institute (JGI-PGF)"/>
            <person name="Lucas S."/>
            <person name="Copeland A."/>
            <person name="Lapidus A."/>
            <person name="Glavina del Rio T."/>
            <person name="Dalin E."/>
            <person name="Tice H."/>
            <person name="Bruce D."/>
            <person name="Goodwin L."/>
            <person name="Pitluck S."/>
            <person name="Kyrpides N."/>
            <person name="Mavromatis K."/>
            <person name="Ivanova N."/>
            <person name="Lykidis A."/>
            <person name="Saunders E."/>
            <person name="Brettin T."/>
            <person name="Detter J.C."/>
            <person name="Han C."/>
            <person name="Land M."/>
            <person name="Hauser L."/>
            <person name="Markowitz V."/>
            <person name="Cheng J.-F."/>
            <person name="Hugenholtz P."/>
            <person name="Woyke T."/>
            <person name="Wu D."/>
            <person name="Spring S."/>
            <person name="Schneider S."/>
            <person name="Schroeder M."/>
            <person name="Klenk H.-P."/>
            <person name="Eisen J.A."/>
        </authorList>
    </citation>
    <scope>NUCLEOTIDE SEQUENCE [LARGE SCALE GENOMIC DNA]</scope>
    <source>
        <strain>ATCC 35705 / DSM 5219 / SLP</strain>
    </source>
</reference>
<reference key="2">
    <citation type="journal article" date="2017" name="Nat. Chem. Biol.">
        <title>Parallel evolution of non-homologous isofunctional enzymes in methionine biosynthesis.</title>
        <authorList>
            <person name="Bastard K."/>
            <person name="Perret A."/>
            <person name="Mariage A."/>
            <person name="Bessonnet T."/>
            <person name="Pinet-Turpault A."/>
            <person name="Petit J.L."/>
            <person name="Darii E."/>
            <person name="Bazire P."/>
            <person name="Vergne-Vaxelaire C."/>
            <person name="Brewee C."/>
            <person name="Debard A."/>
            <person name="Pellouin V."/>
            <person name="Besnard-Gonnet M."/>
            <person name="Artiguenave F."/>
            <person name="Medigue C."/>
            <person name="Vallenet D."/>
            <person name="Danchin A."/>
            <person name="Zaparucha A."/>
            <person name="Weissenbach J."/>
            <person name="Salanoubat M."/>
            <person name="de Berardinis V."/>
        </authorList>
    </citation>
    <scope>FUNCTION</scope>
    <scope>CATALYTIC ACTIVITY</scope>
</reference>
<accession>D5E9R7</accession>
<proteinExistence type="evidence at protein level"/>
<gene>
    <name evidence="1 3" type="primary">metXA</name>
    <name evidence="4" type="ordered locus">Mmah_0386</name>
</gene>
<sequence length="483" mass="53095">MTERSVGYVETKHHHLKEPFRLVSGDELAEVSIAYETYGKLNSDKSNVILICHALTGDAHAAGWHEGDKKPGWWDIVIGPGKAFDTNKYFIICSNVLGGCKGTTGPSSTNPQSGLPYGLSFPRITIEDMVNLQHTLLNNLGISRLYAIAGGSMGGMQVLQWAVSYPGFMKRSIVLASTAISSPQQIAFNEVARQAIIRDPYWNDGDYYGVELPKQGLSLARMIGHITYLSDDSMHDKFGRDIRENEMFQVESYLHHQGDTFTSRFDPNSYLYLTGAIDKFDLSNGYSLAKTFSNIESEFMVISVSSDWLYPSYQSEEIVQALGSNDVDVQYRKLISHFGHDAFLLEKGQLNYLLSTFLGHLTVGDVMSEDVSTLHEGCTLEEAAQLMILKNATHIPILATSGRITGIVTSWDITRAVANKISSIENILSRDILTSRPDESLSSAALVMEDHAISALPVVDDRGCLVGILSSDTISAMVGKGTK</sequence>
<dbReference type="EC" id="2.3.1.31" evidence="1 2"/>
<dbReference type="EMBL" id="CP001994">
    <property type="protein sequence ID" value="ADE35918.1"/>
    <property type="molecule type" value="Genomic_DNA"/>
</dbReference>
<dbReference type="RefSeq" id="WP_013036861.1">
    <property type="nucleotide sequence ID" value="NC_014002.1"/>
</dbReference>
<dbReference type="SMR" id="D5E9R7"/>
<dbReference type="STRING" id="547558.Mmah_0386"/>
<dbReference type="ESTHER" id="metms-metxa">
    <property type="family name" value="Homoserine_transacetylase"/>
</dbReference>
<dbReference type="GeneID" id="8982521"/>
<dbReference type="KEGG" id="mmh:Mmah_0386"/>
<dbReference type="HOGENOM" id="CLU_028760_1_1_2"/>
<dbReference type="OrthoDB" id="295172at2157"/>
<dbReference type="UniPathway" id="UPA00051">
    <property type="reaction ID" value="UER00074"/>
</dbReference>
<dbReference type="Proteomes" id="UP000001059">
    <property type="component" value="Chromosome"/>
</dbReference>
<dbReference type="GO" id="GO:0005737">
    <property type="term" value="C:cytoplasm"/>
    <property type="evidence" value="ECO:0007669"/>
    <property type="project" value="UniProtKB-SubCell"/>
</dbReference>
<dbReference type="GO" id="GO:0004414">
    <property type="term" value="F:homoserine O-acetyltransferase activity"/>
    <property type="evidence" value="ECO:0007669"/>
    <property type="project" value="UniProtKB-UniRule"/>
</dbReference>
<dbReference type="GO" id="GO:0009092">
    <property type="term" value="P:homoserine metabolic process"/>
    <property type="evidence" value="ECO:0007669"/>
    <property type="project" value="TreeGrafter"/>
</dbReference>
<dbReference type="GO" id="GO:0009086">
    <property type="term" value="P:methionine biosynthetic process"/>
    <property type="evidence" value="ECO:0007669"/>
    <property type="project" value="UniProtKB-UniRule"/>
</dbReference>
<dbReference type="CDD" id="cd04605">
    <property type="entry name" value="CBS_pair_arch_MET2_assoc"/>
    <property type="match status" value="1"/>
</dbReference>
<dbReference type="FunFam" id="1.10.1740.110:FF:000001">
    <property type="entry name" value="Homoserine O-acetyltransferase"/>
    <property type="match status" value="1"/>
</dbReference>
<dbReference type="Gene3D" id="1.10.1740.110">
    <property type="match status" value="1"/>
</dbReference>
<dbReference type="Gene3D" id="3.40.50.1820">
    <property type="entry name" value="alpha/beta hydrolase"/>
    <property type="match status" value="1"/>
</dbReference>
<dbReference type="Gene3D" id="3.10.580.10">
    <property type="entry name" value="CBS-domain"/>
    <property type="match status" value="1"/>
</dbReference>
<dbReference type="HAMAP" id="MF_00296">
    <property type="entry name" value="MetX_acyltransf"/>
    <property type="match status" value="1"/>
</dbReference>
<dbReference type="InterPro" id="IPR000073">
    <property type="entry name" value="AB_hydrolase_1"/>
</dbReference>
<dbReference type="InterPro" id="IPR029058">
    <property type="entry name" value="AB_hydrolase_fold"/>
</dbReference>
<dbReference type="InterPro" id="IPR000644">
    <property type="entry name" value="CBS_dom"/>
</dbReference>
<dbReference type="InterPro" id="IPR046342">
    <property type="entry name" value="CBS_dom_sf"/>
</dbReference>
<dbReference type="InterPro" id="IPR008220">
    <property type="entry name" value="HAT_MetX-like"/>
</dbReference>
<dbReference type="NCBIfam" id="TIGR01392">
    <property type="entry name" value="homoserO_Ac_trn"/>
    <property type="match status" value="1"/>
</dbReference>
<dbReference type="NCBIfam" id="NF001209">
    <property type="entry name" value="PRK00175.1"/>
    <property type="match status" value="1"/>
</dbReference>
<dbReference type="PANTHER" id="PTHR32268">
    <property type="entry name" value="HOMOSERINE O-ACETYLTRANSFERASE"/>
    <property type="match status" value="1"/>
</dbReference>
<dbReference type="PANTHER" id="PTHR32268:SF11">
    <property type="entry name" value="HOMOSERINE O-ACETYLTRANSFERASE"/>
    <property type="match status" value="1"/>
</dbReference>
<dbReference type="Pfam" id="PF00561">
    <property type="entry name" value="Abhydrolase_1"/>
    <property type="match status" value="1"/>
</dbReference>
<dbReference type="Pfam" id="PF00571">
    <property type="entry name" value="CBS"/>
    <property type="match status" value="2"/>
</dbReference>
<dbReference type="SMART" id="SM00116">
    <property type="entry name" value="CBS"/>
    <property type="match status" value="2"/>
</dbReference>
<dbReference type="SUPFAM" id="SSF53474">
    <property type="entry name" value="alpha/beta-Hydrolases"/>
    <property type="match status" value="1"/>
</dbReference>
<dbReference type="SUPFAM" id="SSF54631">
    <property type="entry name" value="CBS-domain pair"/>
    <property type="match status" value="1"/>
</dbReference>
<dbReference type="PROSITE" id="PS51371">
    <property type="entry name" value="CBS"/>
    <property type="match status" value="2"/>
</dbReference>
<organism>
    <name type="scientific">Methanohalophilus mahii (strain ATCC 35705 / DSM 5219 / SLP)</name>
    <dbReference type="NCBI Taxonomy" id="547558"/>
    <lineage>
        <taxon>Archaea</taxon>
        <taxon>Methanobacteriati</taxon>
        <taxon>Methanobacteriota</taxon>
        <taxon>Stenosarchaea group</taxon>
        <taxon>Methanomicrobia</taxon>
        <taxon>Methanosarcinales</taxon>
        <taxon>Methanosarcinaceae</taxon>
        <taxon>Methanohalophilus</taxon>
    </lineage>
</organism>
<name>METXA_METMS</name>
<feature type="chain" id="PRO_0000440290" description="Homoserine O-acetyltransferase">
    <location>
        <begin position="1"/>
        <end position="483"/>
    </location>
</feature>
<feature type="domain" description="AB hydrolase-1" evidence="1">
    <location>
        <begin position="47"/>
        <end position="346"/>
    </location>
</feature>
<feature type="domain" description="CBS 1" evidence="1">
    <location>
        <begin position="367"/>
        <end position="423"/>
    </location>
</feature>
<feature type="domain" description="CBS 2" evidence="1">
    <location>
        <begin position="428"/>
        <end position="483"/>
    </location>
</feature>
<feature type="active site" description="Nucleophile" evidence="1">
    <location>
        <position position="152"/>
    </location>
</feature>
<feature type="active site" evidence="1">
    <location>
        <position position="307"/>
    </location>
</feature>
<feature type="active site" evidence="1">
    <location>
        <position position="340"/>
    </location>
</feature>
<feature type="binding site" evidence="1">
    <location>
        <position position="221"/>
    </location>
    <ligand>
        <name>substrate</name>
    </ligand>
</feature>
<feature type="binding site" evidence="1">
    <location>
        <position position="341"/>
    </location>
    <ligand>
        <name>substrate</name>
    </ligand>
</feature>
<keyword id="KW-0012">Acyltransferase</keyword>
<keyword id="KW-0028">Amino-acid biosynthesis</keyword>
<keyword id="KW-0129">CBS domain</keyword>
<keyword id="KW-0963">Cytoplasm</keyword>
<keyword id="KW-0486">Methionine biosynthesis</keyword>
<keyword id="KW-1185">Reference proteome</keyword>
<keyword id="KW-0677">Repeat</keyword>
<keyword id="KW-0808">Transferase</keyword>
<comment type="function">
    <text evidence="1 2">Transfers an acetyl group from acetyl-CoA to L-homoserine, forming acetyl-L-homoserine.</text>
</comment>
<comment type="catalytic activity">
    <reaction evidence="1 2">
        <text>L-homoserine + acetyl-CoA = O-acetyl-L-homoserine + CoA</text>
        <dbReference type="Rhea" id="RHEA:13701"/>
        <dbReference type="ChEBI" id="CHEBI:57287"/>
        <dbReference type="ChEBI" id="CHEBI:57288"/>
        <dbReference type="ChEBI" id="CHEBI:57476"/>
        <dbReference type="ChEBI" id="CHEBI:57716"/>
        <dbReference type="EC" id="2.3.1.31"/>
    </reaction>
</comment>
<comment type="pathway">
    <text evidence="1">Amino-acid biosynthesis; L-methionine biosynthesis via de novo pathway; O-acetyl-L-homoserine from L-homoserine: step 1/1.</text>
</comment>
<comment type="subunit">
    <text evidence="1">Homodimer.</text>
</comment>
<comment type="subcellular location">
    <subcellularLocation>
        <location evidence="1">Cytoplasm</location>
    </subcellularLocation>
</comment>
<comment type="similarity">
    <text evidence="1">Belongs to the AB hydrolase superfamily. MetX family.</text>
</comment>
<evidence type="ECO:0000255" key="1">
    <source>
        <dbReference type="HAMAP-Rule" id="MF_00296"/>
    </source>
</evidence>
<evidence type="ECO:0000269" key="2">
    <source>
    </source>
</evidence>
<evidence type="ECO:0000303" key="3">
    <source>
    </source>
</evidence>
<evidence type="ECO:0000312" key="4">
    <source>
        <dbReference type="EMBL" id="ADE35918.1"/>
    </source>
</evidence>